<organism>
    <name type="scientific">Escherichia coli O81 (strain ED1a)</name>
    <dbReference type="NCBI Taxonomy" id="585397"/>
    <lineage>
        <taxon>Bacteria</taxon>
        <taxon>Pseudomonadati</taxon>
        <taxon>Pseudomonadota</taxon>
        <taxon>Gammaproteobacteria</taxon>
        <taxon>Enterobacterales</taxon>
        <taxon>Enterobacteriaceae</taxon>
        <taxon>Escherichia</taxon>
    </lineage>
</organism>
<sequence>MSTIENFDAHTPMMQQYLKLKAQHPEILLFYRMGDFYELFYDDAKRASQLLDISLTKRGASAGEPIPMAGIPYHAVENYLAKLVNQGESVAICEQIGDPATSKGPVERKVVRIVTPGTISDEALLQERQDNLLAAIWQDSKGFGYATLDISSGRFRLSEPADRETMVAELQRTNPAELLYAEDFAEMSLIEGRRGLRRRPLWEFEIDTARQQLNLQFGTRDLVGFGVENAPRGLCAAGCLLQYAKDTQRTTLPHIRSITMERQQDSIIMDAATRRNLEITQNLAGGAENTLASVLDCTVTPMGSRMLKRWLHMPVRDTRVLLERQQTIGALQDFTAELQPVLRQVGDLERILARLALRTARPRDLARMRHAFQQLPELRAQLENVDSAPVQALREKMGEFAELRDLLERAIIDTPPVLVRDGGVIASGYNEELDEWRALADGATDYLERLEVRERERTGLDTLKVGFNAVHGYYIQISRGQSHLAPINYMRRQTLKNAERYIIPELKEYEDKVLTSKGKALALEKQLYEELFDLLLPHLEALQQSASALAELDVLVNLAERAYTLNYTCPTFIDKPGIRITEGRHPVVEQVLNEPFIANPLNLSPQRRMLIITGPNMGGKSTYMRQTALIALMAYIGSYVPAQKVEIGPIDRIFTRVGAADDLASGRSTFMVEMTETANILHNATEYSLVLMDEIGRGTSTYDGLSLAWACAENLANKIKALTLFATHYFELTQLPEKMEGVANVHLDALEHGDTIAFMHSVQDGAASKSYGLAVAALAGVPKEVIKRARQKLRELESISPNAAATQVDGTQMSLLSVPEETSPAVEALENLDPDSLTPRQALEWIYRLKSLV</sequence>
<accession>B7MYN6</accession>
<comment type="function">
    <text evidence="1">This protein is involved in the repair of mismatches in DNA. It is possible that it carries out the mismatch recognition step. This protein has a weak ATPase activity.</text>
</comment>
<comment type="similarity">
    <text evidence="1">Belongs to the DNA mismatch repair MutS family.</text>
</comment>
<keyword id="KW-0067">ATP-binding</keyword>
<keyword id="KW-0227">DNA damage</keyword>
<keyword id="KW-0234">DNA repair</keyword>
<keyword id="KW-0238">DNA-binding</keyword>
<keyword id="KW-0547">Nucleotide-binding</keyword>
<name>MUTS_ECO81</name>
<dbReference type="EMBL" id="CU928162">
    <property type="protein sequence ID" value="CAR09202.1"/>
    <property type="molecule type" value="Genomic_DNA"/>
</dbReference>
<dbReference type="RefSeq" id="WP_000103867.1">
    <property type="nucleotide sequence ID" value="NC_011745.1"/>
</dbReference>
<dbReference type="SMR" id="B7MYN6"/>
<dbReference type="KEGG" id="ecq:ECED1_3186"/>
<dbReference type="HOGENOM" id="CLU_002472_4_0_6"/>
<dbReference type="Proteomes" id="UP000000748">
    <property type="component" value="Chromosome"/>
</dbReference>
<dbReference type="GO" id="GO:0005829">
    <property type="term" value="C:cytosol"/>
    <property type="evidence" value="ECO:0007669"/>
    <property type="project" value="TreeGrafter"/>
</dbReference>
<dbReference type="GO" id="GO:0005524">
    <property type="term" value="F:ATP binding"/>
    <property type="evidence" value="ECO:0007669"/>
    <property type="project" value="UniProtKB-UniRule"/>
</dbReference>
<dbReference type="GO" id="GO:0140664">
    <property type="term" value="F:ATP-dependent DNA damage sensor activity"/>
    <property type="evidence" value="ECO:0007669"/>
    <property type="project" value="InterPro"/>
</dbReference>
<dbReference type="GO" id="GO:0003684">
    <property type="term" value="F:damaged DNA binding"/>
    <property type="evidence" value="ECO:0007669"/>
    <property type="project" value="UniProtKB-UniRule"/>
</dbReference>
<dbReference type="GO" id="GO:0030983">
    <property type="term" value="F:mismatched DNA binding"/>
    <property type="evidence" value="ECO:0007669"/>
    <property type="project" value="InterPro"/>
</dbReference>
<dbReference type="GO" id="GO:0006298">
    <property type="term" value="P:mismatch repair"/>
    <property type="evidence" value="ECO:0007669"/>
    <property type="project" value="UniProtKB-UniRule"/>
</dbReference>
<dbReference type="CDD" id="cd03284">
    <property type="entry name" value="ABC_MutS1"/>
    <property type="match status" value="1"/>
</dbReference>
<dbReference type="FunFam" id="1.10.1420.10:FF:000002">
    <property type="entry name" value="DNA mismatch repair protein MutS"/>
    <property type="match status" value="1"/>
</dbReference>
<dbReference type="FunFam" id="3.30.420.110:FF:000001">
    <property type="entry name" value="DNA mismatch repair protein MutS"/>
    <property type="match status" value="1"/>
</dbReference>
<dbReference type="FunFam" id="3.40.1170.10:FF:000001">
    <property type="entry name" value="DNA mismatch repair protein MutS"/>
    <property type="match status" value="1"/>
</dbReference>
<dbReference type="FunFam" id="3.40.50.300:FF:000283">
    <property type="entry name" value="DNA mismatch repair protein MutS"/>
    <property type="match status" value="1"/>
</dbReference>
<dbReference type="Gene3D" id="1.10.1420.10">
    <property type="match status" value="2"/>
</dbReference>
<dbReference type="Gene3D" id="6.10.140.430">
    <property type="match status" value="1"/>
</dbReference>
<dbReference type="Gene3D" id="3.40.1170.10">
    <property type="entry name" value="DNA repair protein MutS, domain I"/>
    <property type="match status" value="1"/>
</dbReference>
<dbReference type="Gene3D" id="3.30.420.110">
    <property type="entry name" value="MutS, connector domain"/>
    <property type="match status" value="1"/>
</dbReference>
<dbReference type="Gene3D" id="3.40.50.300">
    <property type="entry name" value="P-loop containing nucleotide triphosphate hydrolases"/>
    <property type="match status" value="1"/>
</dbReference>
<dbReference type="HAMAP" id="MF_00096">
    <property type="entry name" value="MutS"/>
    <property type="match status" value="1"/>
</dbReference>
<dbReference type="InterPro" id="IPR005748">
    <property type="entry name" value="DNA_mismatch_repair_MutS"/>
</dbReference>
<dbReference type="InterPro" id="IPR007695">
    <property type="entry name" value="DNA_mismatch_repair_MutS-lik_N"/>
</dbReference>
<dbReference type="InterPro" id="IPR017261">
    <property type="entry name" value="DNA_mismatch_repair_MutS/MSH"/>
</dbReference>
<dbReference type="InterPro" id="IPR000432">
    <property type="entry name" value="DNA_mismatch_repair_MutS_C"/>
</dbReference>
<dbReference type="InterPro" id="IPR007861">
    <property type="entry name" value="DNA_mismatch_repair_MutS_clamp"/>
</dbReference>
<dbReference type="InterPro" id="IPR007696">
    <property type="entry name" value="DNA_mismatch_repair_MutS_core"/>
</dbReference>
<dbReference type="InterPro" id="IPR016151">
    <property type="entry name" value="DNA_mismatch_repair_MutS_N"/>
</dbReference>
<dbReference type="InterPro" id="IPR036187">
    <property type="entry name" value="DNA_mismatch_repair_MutS_sf"/>
</dbReference>
<dbReference type="InterPro" id="IPR007860">
    <property type="entry name" value="DNA_mmatch_repair_MutS_con_dom"/>
</dbReference>
<dbReference type="InterPro" id="IPR045076">
    <property type="entry name" value="MutS"/>
</dbReference>
<dbReference type="InterPro" id="IPR036678">
    <property type="entry name" value="MutS_con_dom_sf"/>
</dbReference>
<dbReference type="InterPro" id="IPR027417">
    <property type="entry name" value="P-loop_NTPase"/>
</dbReference>
<dbReference type="NCBIfam" id="TIGR01070">
    <property type="entry name" value="mutS1"/>
    <property type="match status" value="1"/>
</dbReference>
<dbReference type="NCBIfam" id="NF003810">
    <property type="entry name" value="PRK05399.1"/>
    <property type="match status" value="1"/>
</dbReference>
<dbReference type="PANTHER" id="PTHR11361:SF34">
    <property type="entry name" value="DNA MISMATCH REPAIR PROTEIN MSH1, MITOCHONDRIAL"/>
    <property type="match status" value="1"/>
</dbReference>
<dbReference type="PANTHER" id="PTHR11361">
    <property type="entry name" value="DNA MISMATCH REPAIR PROTEIN MUTS FAMILY MEMBER"/>
    <property type="match status" value="1"/>
</dbReference>
<dbReference type="Pfam" id="PF01624">
    <property type="entry name" value="MutS_I"/>
    <property type="match status" value="1"/>
</dbReference>
<dbReference type="Pfam" id="PF05188">
    <property type="entry name" value="MutS_II"/>
    <property type="match status" value="1"/>
</dbReference>
<dbReference type="Pfam" id="PF05192">
    <property type="entry name" value="MutS_III"/>
    <property type="match status" value="1"/>
</dbReference>
<dbReference type="Pfam" id="PF05190">
    <property type="entry name" value="MutS_IV"/>
    <property type="match status" value="1"/>
</dbReference>
<dbReference type="Pfam" id="PF00488">
    <property type="entry name" value="MutS_V"/>
    <property type="match status" value="1"/>
</dbReference>
<dbReference type="PIRSF" id="PIRSF037677">
    <property type="entry name" value="DNA_mis_repair_Msh6"/>
    <property type="match status" value="1"/>
</dbReference>
<dbReference type="SMART" id="SM00534">
    <property type="entry name" value="MUTSac"/>
    <property type="match status" value="1"/>
</dbReference>
<dbReference type="SMART" id="SM00533">
    <property type="entry name" value="MUTSd"/>
    <property type="match status" value="1"/>
</dbReference>
<dbReference type="SUPFAM" id="SSF55271">
    <property type="entry name" value="DNA repair protein MutS, domain I"/>
    <property type="match status" value="1"/>
</dbReference>
<dbReference type="SUPFAM" id="SSF53150">
    <property type="entry name" value="DNA repair protein MutS, domain II"/>
    <property type="match status" value="1"/>
</dbReference>
<dbReference type="SUPFAM" id="SSF48334">
    <property type="entry name" value="DNA repair protein MutS, domain III"/>
    <property type="match status" value="1"/>
</dbReference>
<dbReference type="SUPFAM" id="SSF52540">
    <property type="entry name" value="P-loop containing nucleoside triphosphate hydrolases"/>
    <property type="match status" value="1"/>
</dbReference>
<dbReference type="PROSITE" id="PS00486">
    <property type="entry name" value="DNA_MISMATCH_REPAIR_2"/>
    <property type="match status" value="1"/>
</dbReference>
<gene>
    <name evidence="1" type="primary">mutS</name>
    <name type="ordered locus">ECED1_3186</name>
</gene>
<reference key="1">
    <citation type="journal article" date="2009" name="PLoS Genet.">
        <title>Organised genome dynamics in the Escherichia coli species results in highly diverse adaptive paths.</title>
        <authorList>
            <person name="Touchon M."/>
            <person name="Hoede C."/>
            <person name="Tenaillon O."/>
            <person name="Barbe V."/>
            <person name="Baeriswyl S."/>
            <person name="Bidet P."/>
            <person name="Bingen E."/>
            <person name="Bonacorsi S."/>
            <person name="Bouchier C."/>
            <person name="Bouvet O."/>
            <person name="Calteau A."/>
            <person name="Chiapello H."/>
            <person name="Clermont O."/>
            <person name="Cruveiller S."/>
            <person name="Danchin A."/>
            <person name="Diard M."/>
            <person name="Dossat C."/>
            <person name="Karoui M.E."/>
            <person name="Frapy E."/>
            <person name="Garry L."/>
            <person name="Ghigo J.M."/>
            <person name="Gilles A.M."/>
            <person name="Johnson J."/>
            <person name="Le Bouguenec C."/>
            <person name="Lescat M."/>
            <person name="Mangenot S."/>
            <person name="Martinez-Jehanne V."/>
            <person name="Matic I."/>
            <person name="Nassif X."/>
            <person name="Oztas S."/>
            <person name="Petit M.A."/>
            <person name="Pichon C."/>
            <person name="Rouy Z."/>
            <person name="Ruf C.S."/>
            <person name="Schneider D."/>
            <person name="Tourret J."/>
            <person name="Vacherie B."/>
            <person name="Vallenet D."/>
            <person name="Medigue C."/>
            <person name="Rocha E.P.C."/>
            <person name="Denamur E."/>
        </authorList>
    </citation>
    <scope>NUCLEOTIDE SEQUENCE [LARGE SCALE GENOMIC DNA]</scope>
    <source>
        <strain>ED1a</strain>
    </source>
</reference>
<proteinExistence type="inferred from homology"/>
<evidence type="ECO:0000255" key="1">
    <source>
        <dbReference type="HAMAP-Rule" id="MF_00096"/>
    </source>
</evidence>
<feature type="chain" id="PRO_1000118683" description="DNA mismatch repair protein MutS">
    <location>
        <begin position="1"/>
        <end position="853"/>
    </location>
</feature>
<feature type="binding site" evidence="1">
    <location>
        <begin position="614"/>
        <end position="621"/>
    </location>
    <ligand>
        <name>ATP</name>
        <dbReference type="ChEBI" id="CHEBI:30616"/>
    </ligand>
</feature>
<protein>
    <recommendedName>
        <fullName evidence="1">DNA mismatch repair protein MutS</fullName>
    </recommendedName>
</protein>